<sequence>MADPQATNGTGAACAERDASDVGDARDEGAGRVVAVRGAVIDVAFDGGALPALNEALTIPVDGAAPILAEVHAHLSDAAVRALALGPTGGLRRGAAVRATGGPIRVPVGDAVLGRLLSVTGAPGDDGAALAADVERRPIHRGAPLLAEQKSANALFATGIKVIDLLAPLAQGGKAAMFGGAGVGKTVLVMELIHAMVERYRGISVFAGIGERSREGHEMLLDMRGSGVLGRTVLVYGQMNEPPGARWRVPLTALAIAEYFRDERAQNVLLLMDNVFRFVQAGAEVSGLLGRLPSRVGYQPTLASEVAALQERIASVEGAAVTAIEAVYVPADDFTDPAVTAIAAHVDSMVVLSRAMAAEGMYPAIDPVASSSILLDPLVVGEAHVEVAIEVRRVIEHYRELQDVIALLGIDELGADDRRLVGRARRLQRFLTQPFAVTEAFTGQAGASVEIADTIAGCRAILRGDCDDWRESSLYMVGTLDDARRKEAAAREADARREAAAAASGAGPGTTSDPASGSAEPQGARHGR</sequence>
<organism>
    <name type="scientific">Burkholderia pseudomallei (strain 1106a)</name>
    <dbReference type="NCBI Taxonomy" id="357348"/>
    <lineage>
        <taxon>Bacteria</taxon>
        <taxon>Pseudomonadati</taxon>
        <taxon>Pseudomonadota</taxon>
        <taxon>Betaproteobacteria</taxon>
        <taxon>Burkholderiales</taxon>
        <taxon>Burkholderiaceae</taxon>
        <taxon>Burkholderia</taxon>
        <taxon>pseudomallei group</taxon>
    </lineage>
</organism>
<gene>
    <name evidence="1" type="primary">atpD2</name>
    <name type="ordered locus">BURPS1106A_A2652</name>
</gene>
<proteinExistence type="inferred from homology"/>
<comment type="function">
    <text evidence="1">Produces ATP from ADP in the presence of a proton gradient across the membrane. The catalytic sites are hosted primarily by the beta subunits.</text>
</comment>
<comment type="catalytic activity">
    <reaction evidence="1">
        <text>ATP + H2O + 4 H(+)(in) = ADP + phosphate + 5 H(+)(out)</text>
        <dbReference type="Rhea" id="RHEA:57720"/>
        <dbReference type="ChEBI" id="CHEBI:15377"/>
        <dbReference type="ChEBI" id="CHEBI:15378"/>
        <dbReference type="ChEBI" id="CHEBI:30616"/>
        <dbReference type="ChEBI" id="CHEBI:43474"/>
        <dbReference type="ChEBI" id="CHEBI:456216"/>
        <dbReference type="EC" id="7.1.2.2"/>
    </reaction>
</comment>
<comment type="subunit">
    <text evidence="1">F-type ATPases have 2 components, CF(1) - the catalytic core - and CF(0) - the membrane proton channel. CF(1) has five subunits: alpha(3), beta(3), gamma(1), delta(1), epsilon(1). CF(0) has three main subunits: a(1), b(2) and c(9-12). The alpha and beta chains form an alternating ring which encloses part of the gamma chain. CF(1) is attached to CF(0) by a central stalk formed by the gamma and epsilon chains, while a peripheral stalk is formed by the delta and b chains.</text>
</comment>
<comment type="subcellular location">
    <subcellularLocation>
        <location evidence="1">Cell inner membrane</location>
        <topology evidence="1">Peripheral membrane protein</topology>
    </subcellularLocation>
</comment>
<comment type="similarity">
    <text evidence="1">Belongs to the ATPase alpha/beta chains family.</text>
</comment>
<protein>
    <recommendedName>
        <fullName evidence="1">ATP synthase subunit beta 2</fullName>
        <ecNumber evidence="1">7.1.2.2</ecNumber>
    </recommendedName>
    <alternativeName>
        <fullName evidence="1">ATP synthase F1 sector subunit beta 2</fullName>
    </alternativeName>
    <alternativeName>
        <fullName evidence="1">F-ATPase subunit beta 2</fullName>
    </alternativeName>
</protein>
<keyword id="KW-0066">ATP synthesis</keyword>
<keyword id="KW-0067">ATP-binding</keyword>
<keyword id="KW-0997">Cell inner membrane</keyword>
<keyword id="KW-1003">Cell membrane</keyword>
<keyword id="KW-0139">CF(1)</keyword>
<keyword id="KW-0375">Hydrogen ion transport</keyword>
<keyword id="KW-0406">Ion transport</keyword>
<keyword id="KW-0472">Membrane</keyword>
<keyword id="KW-0547">Nucleotide-binding</keyword>
<keyword id="KW-1278">Translocase</keyword>
<keyword id="KW-0813">Transport</keyword>
<evidence type="ECO:0000255" key="1">
    <source>
        <dbReference type="HAMAP-Rule" id="MF_01347"/>
    </source>
</evidence>
<evidence type="ECO:0000256" key="2">
    <source>
        <dbReference type="SAM" id="MobiDB-lite"/>
    </source>
</evidence>
<feature type="chain" id="PRO_0000339494" description="ATP synthase subunit beta 2">
    <location>
        <begin position="1"/>
        <end position="528"/>
    </location>
</feature>
<feature type="region of interest" description="Disordered" evidence="2">
    <location>
        <begin position="1"/>
        <end position="27"/>
    </location>
</feature>
<feature type="region of interest" description="Disordered" evidence="2">
    <location>
        <begin position="488"/>
        <end position="528"/>
    </location>
</feature>
<feature type="compositionally biased region" description="Polar residues" evidence="2">
    <location>
        <begin position="1"/>
        <end position="10"/>
    </location>
</feature>
<feature type="compositionally biased region" description="Basic and acidic residues" evidence="2">
    <location>
        <begin position="15"/>
        <end position="27"/>
    </location>
</feature>
<feature type="compositionally biased region" description="Basic and acidic residues" evidence="2">
    <location>
        <begin position="488"/>
        <end position="499"/>
    </location>
</feature>
<feature type="binding site" evidence="1">
    <location>
        <begin position="179"/>
        <end position="186"/>
    </location>
    <ligand>
        <name>ATP</name>
        <dbReference type="ChEBI" id="CHEBI:30616"/>
    </ligand>
</feature>
<dbReference type="EC" id="7.1.2.2" evidence="1"/>
<dbReference type="EMBL" id="CP000573">
    <property type="protein sequence ID" value="ABN92932.1"/>
    <property type="molecule type" value="Genomic_DNA"/>
</dbReference>
<dbReference type="SMR" id="A3P8M2"/>
<dbReference type="KEGG" id="bpl:BURPS1106A_A2652"/>
<dbReference type="HOGENOM" id="CLU_022398_0_2_4"/>
<dbReference type="Proteomes" id="UP000006738">
    <property type="component" value="Chromosome II"/>
</dbReference>
<dbReference type="GO" id="GO:0005886">
    <property type="term" value="C:plasma membrane"/>
    <property type="evidence" value="ECO:0007669"/>
    <property type="project" value="UniProtKB-SubCell"/>
</dbReference>
<dbReference type="GO" id="GO:0045259">
    <property type="term" value="C:proton-transporting ATP synthase complex"/>
    <property type="evidence" value="ECO:0007669"/>
    <property type="project" value="UniProtKB-KW"/>
</dbReference>
<dbReference type="GO" id="GO:0005524">
    <property type="term" value="F:ATP binding"/>
    <property type="evidence" value="ECO:0007669"/>
    <property type="project" value="UniProtKB-UniRule"/>
</dbReference>
<dbReference type="GO" id="GO:0016887">
    <property type="term" value="F:ATP hydrolysis activity"/>
    <property type="evidence" value="ECO:0007669"/>
    <property type="project" value="InterPro"/>
</dbReference>
<dbReference type="GO" id="GO:0046933">
    <property type="term" value="F:proton-transporting ATP synthase activity, rotational mechanism"/>
    <property type="evidence" value="ECO:0007669"/>
    <property type="project" value="UniProtKB-UniRule"/>
</dbReference>
<dbReference type="CDD" id="cd18110">
    <property type="entry name" value="ATP-synt_F1_beta_C"/>
    <property type="match status" value="1"/>
</dbReference>
<dbReference type="CDD" id="cd18115">
    <property type="entry name" value="ATP-synt_F1_beta_N"/>
    <property type="match status" value="1"/>
</dbReference>
<dbReference type="CDD" id="cd01133">
    <property type="entry name" value="F1-ATPase_beta_CD"/>
    <property type="match status" value="1"/>
</dbReference>
<dbReference type="Gene3D" id="2.40.10.170">
    <property type="match status" value="1"/>
</dbReference>
<dbReference type="Gene3D" id="1.10.1140.10">
    <property type="entry name" value="Bovine Mitochondrial F1-atpase, Atp Synthase Beta Chain, Chain D, domain 3"/>
    <property type="match status" value="1"/>
</dbReference>
<dbReference type="Gene3D" id="3.40.50.300">
    <property type="entry name" value="P-loop containing nucleotide triphosphate hydrolases"/>
    <property type="match status" value="1"/>
</dbReference>
<dbReference type="HAMAP" id="MF_01347">
    <property type="entry name" value="ATP_synth_beta_bact"/>
    <property type="match status" value="1"/>
</dbReference>
<dbReference type="InterPro" id="IPR003593">
    <property type="entry name" value="AAA+_ATPase"/>
</dbReference>
<dbReference type="InterPro" id="IPR055190">
    <property type="entry name" value="ATP-synt_VA_C"/>
</dbReference>
<dbReference type="InterPro" id="IPR005722">
    <property type="entry name" value="ATP_synth_F1_bsu"/>
</dbReference>
<dbReference type="InterPro" id="IPR020003">
    <property type="entry name" value="ATPase_a/bsu_AS"/>
</dbReference>
<dbReference type="InterPro" id="IPR050053">
    <property type="entry name" value="ATPase_alpha/beta_chains"/>
</dbReference>
<dbReference type="InterPro" id="IPR004100">
    <property type="entry name" value="ATPase_F1/V1/A1_a/bsu_N"/>
</dbReference>
<dbReference type="InterPro" id="IPR036121">
    <property type="entry name" value="ATPase_F1/V1/A1_a/bsu_N_sf"/>
</dbReference>
<dbReference type="InterPro" id="IPR000194">
    <property type="entry name" value="ATPase_F1/V1/A1_a/bsu_nucl-bd"/>
</dbReference>
<dbReference type="InterPro" id="IPR024034">
    <property type="entry name" value="ATPase_F1/V1_b/a_C"/>
</dbReference>
<dbReference type="InterPro" id="IPR027417">
    <property type="entry name" value="P-loop_NTPase"/>
</dbReference>
<dbReference type="NCBIfam" id="TIGR01039">
    <property type="entry name" value="atpD"/>
    <property type="match status" value="1"/>
</dbReference>
<dbReference type="PANTHER" id="PTHR15184">
    <property type="entry name" value="ATP SYNTHASE"/>
    <property type="match status" value="1"/>
</dbReference>
<dbReference type="PANTHER" id="PTHR15184:SF71">
    <property type="entry name" value="ATP SYNTHASE SUBUNIT BETA, MITOCHONDRIAL"/>
    <property type="match status" value="1"/>
</dbReference>
<dbReference type="Pfam" id="PF00006">
    <property type="entry name" value="ATP-synt_ab"/>
    <property type="match status" value="1"/>
</dbReference>
<dbReference type="Pfam" id="PF02874">
    <property type="entry name" value="ATP-synt_ab_N"/>
    <property type="match status" value="1"/>
</dbReference>
<dbReference type="Pfam" id="PF22919">
    <property type="entry name" value="ATP-synt_VA_C"/>
    <property type="match status" value="1"/>
</dbReference>
<dbReference type="SMART" id="SM00382">
    <property type="entry name" value="AAA"/>
    <property type="match status" value="1"/>
</dbReference>
<dbReference type="SUPFAM" id="SSF47917">
    <property type="entry name" value="C-terminal domain of alpha and beta subunits of F1 ATP synthase"/>
    <property type="match status" value="1"/>
</dbReference>
<dbReference type="SUPFAM" id="SSF50615">
    <property type="entry name" value="N-terminal domain of alpha and beta subunits of F1 ATP synthase"/>
    <property type="match status" value="1"/>
</dbReference>
<dbReference type="SUPFAM" id="SSF52540">
    <property type="entry name" value="P-loop containing nucleoside triphosphate hydrolases"/>
    <property type="match status" value="1"/>
</dbReference>
<dbReference type="PROSITE" id="PS00152">
    <property type="entry name" value="ATPASE_ALPHA_BETA"/>
    <property type="match status" value="1"/>
</dbReference>
<accession>A3P8M2</accession>
<reference key="1">
    <citation type="journal article" date="2010" name="Genome Biol. Evol.">
        <title>Continuing evolution of Burkholderia mallei through genome reduction and large-scale rearrangements.</title>
        <authorList>
            <person name="Losada L."/>
            <person name="Ronning C.M."/>
            <person name="DeShazer D."/>
            <person name="Woods D."/>
            <person name="Fedorova N."/>
            <person name="Kim H.S."/>
            <person name="Shabalina S.A."/>
            <person name="Pearson T.R."/>
            <person name="Brinkac L."/>
            <person name="Tan P."/>
            <person name="Nandi T."/>
            <person name="Crabtree J."/>
            <person name="Badger J."/>
            <person name="Beckstrom-Sternberg S."/>
            <person name="Saqib M."/>
            <person name="Schutzer S.E."/>
            <person name="Keim P."/>
            <person name="Nierman W.C."/>
        </authorList>
    </citation>
    <scope>NUCLEOTIDE SEQUENCE [LARGE SCALE GENOMIC DNA]</scope>
    <source>
        <strain>1106a</strain>
    </source>
</reference>
<name>ATPB2_BURP0</name>